<reference key="1">
    <citation type="journal article" date="2004" name="Proc. Natl. Acad. Sci. U.S.A.">
        <title>Complete genomes of two clinical Staphylococcus aureus strains: evidence for the rapid evolution of virulence and drug resistance.</title>
        <authorList>
            <person name="Holden M.T.G."/>
            <person name="Feil E.J."/>
            <person name="Lindsay J.A."/>
            <person name="Peacock S.J."/>
            <person name="Day N.P.J."/>
            <person name="Enright M.C."/>
            <person name="Foster T.J."/>
            <person name="Moore C.E."/>
            <person name="Hurst L."/>
            <person name="Atkin R."/>
            <person name="Barron A."/>
            <person name="Bason N."/>
            <person name="Bentley S.D."/>
            <person name="Chillingworth C."/>
            <person name="Chillingworth T."/>
            <person name="Churcher C."/>
            <person name="Clark L."/>
            <person name="Corton C."/>
            <person name="Cronin A."/>
            <person name="Doggett J."/>
            <person name="Dowd L."/>
            <person name="Feltwell T."/>
            <person name="Hance Z."/>
            <person name="Harris B."/>
            <person name="Hauser H."/>
            <person name="Holroyd S."/>
            <person name="Jagels K."/>
            <person name="James K.D."/>
            <person name="Lennard N."/>
            <person name="Line A."/>
            <person name="Mayes R."/>
            <person name="Moule S."/>
            <person name="Mungall K."/>
            <person name="Ormond D."/>
            <person name="Quail M.A."/>
            <person name="Rabbinowitsch E."/>
            <person name="Rutherford K.M."/>
            <person name="Sanders M."/>
            <person name="Sharp S."/>
            <person name="Simmonds M."/>
            <person name="Stevens K."/>
            <person name="Whitehead S."/>
            <person name="Barrell B.G."/>
            <person name="Spratt B.G."/>
            <person name="Parkhill J."/>
        </authorList>
    </citation>
    <scope>NUCLEOTIDE SEQUENCE [LARGE SCALE GENOMIC DNA]</scope>
    <source>
        <strain>MSSA476</strain>
    </source>
</reference>
<dbReference type="EC" id="5.1.1.1" evidence="1"/>
<dbReference type="EMBL" id="BX571857">
    <property type="protein sequence ID" value="CAG43782.1"/>
    <property type="molecule type" value="Genomic_DNA"/>
</dbReference>
<dbReference type="SMR" id="Q6G7N9"/>
<dbReference type="KEGG" id="sas:SAS1975"/>
<dbReference type="HOGENOM" id="CLU_028393_2_1_9"/>
<dbReference type="UniPathway" id="UPA00042">
    <property type="reaction ID" value="UER00497"/>
</dbReference>
<dbReference type="GO" id="GO:0005829">
    <property type="term" value="C:cytosol"/>
    <property type="evidence" value="ECO:0007669"/>
    <property type="project" value="TreeGrafter"/>
</dbReference>
<dbReference type="GO" id="GO:0008784">
    <property type="term" value="F:alanine racemase activity"/>
    <property type="evidence" value="ECO:0007669"/>
    <property type="project" value="UniProtKB-UniRule"/>
</dbReference>
<dbReference type="GO" id="GO:0030170">
    <property type="term" value="F:pyridoxal phosphate binding"/>
    <property type="evidence" value="ECO:0007669"/>
    <property type="project" value="UniProtKB-UniRule"/>
</dbReference>
<dbReference type="GO" id="GO:0030632">
    <property type="term" value="P:D-alanine biosynthetic process"/>
    <property type="evidence" value="ECO:0007669"/>
    <property type="project" value="UniProtKB-UniRule"/>
</dbReference>
<dbReference type="GO" id="GO:0009252">
    <property type="term" value="P:peptidoglycan biosynthetic process"/>
    <property type="evidence" value="ECO:0007669"/>
    <property type="project" value="TreeGrafter"/>
</dbReference>
<dbReference type="CDD" id="cd00430">
    <property type="entry name" value="PLPDE_III_AR"/>
    <property type="match status" value="1"/>
</dbReference>
<dbReference type="FunFam" id="2.40.37.10:FF:000006">
    <property type="entry name" value="Alanine racemase"/>
    <property type="match status" value="1"/>
</dbReference>
<dbReference type="FunFam" id="3.20.20.10:FF:000002">
    <property type="entry name" value="Alanine racemase"/>
    <property type="match status" value="1"/>
</dbReference>
<dbReference type="Gene3D" id="3.20.20.10">
    <property type="entry name" value="Alanine racemase"/>
    <property type="match status" value="1"/>
</dbReference>
<dbReference type="Gene3D" id="2.40.37.10">
    <property type="entry name" value="Lyase, Ornithine Decarboxylase, Chain A, domain 1"/>
    <property type="match status" value="1"/>
</dbReference>
<dbReference type="HAMAP" id="MF_01201">
    <property type="entry name" value="Ala_racemase"/>
    <property type="match status" value="1"/>
</dbReference>
<dbReference type="InterPro" id="IPR000821">
    <property type="entry name" value="Ala_racemase"/>
</dbReference>
<dbReference type="InterPro" id="IPR009006">
    <property type="entry name" value="Ala_racemase/Decarboxylase_C"/>
</dbReference>
<dbReference type="InterPro" id="IPR011079">
    <property type="entry name" value="Ala_racemase_C"/>
</dbReference>
<dbReference type="InterPro" id="IPR001608">
    <property type="entry name" value="Ala_racemase_N"/>
</dbReference>
<dbReference type="InterPro" id="IPR020622">
    <property type="entry name" value="Ala_racemase_pyridoxalP-BS"/>
</dbReference>
<dbReference type="InterPro" id="IPR029066">
    <property type="entry name" value="PLP-binding_barrel"/>
</dbReference>
<dbReference type="NCBIfam" id="TIGR00492">
    <property type="entry name" value="alr"/>
    <property type="match status" value="1"/>
</dbReference>
<dbReference type="PANTHER" id="PTHR30511">
    <property type="entry name" value="ALANINE RACEMASE"/>
    <property type="match status" value="1"/>
</dbReference>
<dbReference type="PANTHER" id="PTHR30511:SF0">
    <property type="entry name" value="ALANINE RACEMASE, CATABOLIC-RELATED"/>
    <property type="match status" value="1"/>
</dbReference>
<dbReference type="Pfam" id="PF00842">
    <property type="entry name" value="Ala_racemase_C"/>
    <property type="match status" value="1"/>
</dbReference>
<dbReference type="Pfam" id="PF01168">
    <property type="entry name" value="Ala_racemase_N"/>
    <property type="match status" value="1"/>
</dbReference>
<dbReference type="PRINTS" id="PR00992">
    <property type="entry name" value="ALARACEMASE"/>
</dbReference>
<dbReference type="SMART" id="SM01005">
    <property type="entry name" value="Ala_racemase_C"/>
    <property type="match status" value="1"/>
</dbReference>
<dbReference type="SUPFAM" id="SSF50621">
    <property type="entry name" value="Alanine racemase C-terminal domain-like"/>
    <property type="match status" value="1"/>
</dbReference>
<dbReference type="SUPFAM" id="SSF51419">
    <property type="entry name" value="PLP-binding barrel"/>
    <property type="match status" value="1"/>
</dbReference>
<dbReference type="PROSITE" id="PS00395">
    <property type="entry name" value="ALANINE_RACEMASE"/>
    <property type="match status" value="1"/>
</dbReference>
<proteinExistence type="inferred from homology"/>
<evidence type="ECO:0000255" key="1">
    <source>
        <dbReference type="HAMAP-Rule" id="MF_01201"/>
    </source>
</evidence>
<keyword id="KW-0413">Isomerase</keyword>
<keyword id="KW-0663">Pyridoxal phosphate</keyword>
<comment type="function">
    <text evidence="1">Catalyzes the interconversion of L-alanine and D-alanine. May also act on other amino acids.</text>
</comment>
<comment type="catalytic activity">
    <reaction evidence="1">
        <text>L-alanine = D-alanine</text>
        <dbReference type="Rhea" id="RHEA:20249"/>
        <dbReference type="ChEBI" id="CHEBI:57416"/>
        <dbReference type="ChEBI" id="CHEBI:57972"/>
        <dbReference type="EC" id="5.1.1.1"/>
    </reaction>
</comment>
<comment type="cofactor">
    <cofactor evidence="1">
        <name>pyridoxal 5'-phosphate</name>
        <dbReference type="ChEBI" id="CHEBI:597326"/>
    </cofactor>
</comment>
<comment type="pathway">
    <text evidence="1">Amino-acid biosynthesis; D-alanine biosynthesis; D-alanine from L-alanine: step 1/1.</text>
</comment>
<comment type="similarity">
    <text evidence="1">Belongs to the alanine racemase family.</text>
</comment>
<name>ALR1_STAAS</name>
<feature type="chain" id="PRO_0000114571" description="Alanine racemase 1">
    <location>
        <begin position="1"/>
        <end position="382"/>
    </location>
</feature>
<feature type="active site" description="Proton acceptor; specific for D-alanine" evidence="1">
    <location>
        <position position="39"/>
    </location>
</feature>
<feature type="active site" description="Proton acceptor; specific for L-alanine" evidence="1">
    <location>
        <position position="265"/>
    </location>
</feature>
<feature type="binding site" evidence="1">
    <location>
        <position position="138"/>
    </location>
    <ligand>
        <name>substrate</name>
    </ligand>
</feature>
<feature type="binding site" evidence="1">
    <location>
        <position position="312"/>
    </location>
    <ligand>
        <name>substrate</name>
    </ligand>
</feature>
<feature type="modified residue" description="N6-(pyridoxal phosphate)lysine" evidence="1">
    <location>
        <position position="39"/>
    </location>
</feature>
<protein>
    <recommendedName>
        <fullName evidence="1">Alanine racemase 1</fullName>
        <ecNumber evidence="1">5.1.1.1</ecNumber>
    </recommendedName>
</protein>
<gene>
    <name type="primary">alr1</name>
    <name type="ordered locus">SAS1975</name>
</gene>
<accession>Q6G7N9</accession>
<sequence>MSDKYYRSAYMNVDLNAVASNFKVFSTLHPNKTVMAVVKANAYGLGSVKVARHLMENGATFFAVATLDEAIELRMHGITAKILVLGVLPAKDIDKAIQHRVALTVPSKQWLKEAIKNISGEQEKKLWLHIKLDTGMGRLGIKDTNTYQEVIEIIQQYEQLVFEGVFTHFACADEPGDMTTEQYQRFKDMVNEAIKPEYIHCQNSAGSLLMDCQFCNAIRPGISLYGYYPSEYVQQKVKVHLKPSVQLIANVVQTKTLQAGESVSYGATYTATDPTTIALLPIGYADGYLRIMQGSFVNVNGHQCEVIGRVCMDQTIVKVPDQVKAGDSVILIDNHRESPQSVEVVAEKQHTINYEVLCNLSRRLPRIYHDGDQRFVTNELLK</sequence>
<organism>
    <name type="scientific">Staphylococcus aureus (strain MSSA476)</name>
    <dbReference type="NCBI Taxonomy" id="282459"/>
    <lineage>
        <taxon>Bacteria</taxon>
        <taxon>Bacillati</taxon>
        <taxon>Bacillota</taxon>
        <taxon>Bacilli</taxon>
        <taxon>Bacillales</taxon>
        <taxon>Staphylococcaceae</taxon>
        <taxon>Staphylococcus</taxon>
    </lineage>
</organism>